<keyword id="KW-0378">Hydrolase</keyword>
<keyword id="KW-1185">Reference proteome</keyword>
<reference key="1">
    <citation type="journal article" date="2002" name="Nucleic Acids Res.">
        <title>Genome sequence of Oceanobacillus iheyensis isolated from the Iheya Ridge and its unexpected adaptive capabilities to extreme environments.</title>
        <authorList>
            <person name="Takami H."/>
            <person name="Takaki Y."/>
            <person name="Uchiyama I."/>
        </authorList>
    </citation>
    <scope>NUCLEOTIDE SEQUENCE [LARGE SCALE GENOMIC DNA]</scope>
    <source>
        <strain>DSM 14371 / CIP 107618 / JCM 11309 / KCTC 3954 / HTE831</strain>
    </source>
</reference>
<sequence>MMKFGFDIDDTLIRLREHAFHIYQRKLNQQVDIEKFHQLERVEIHELFSLNEQEGKQMWEDSLEEIYFTDCPIYPGALETVLQLEELGHEIYYITARPKLHGEQTKAWLRQNEFPVLDSHFFYGMKDNEKMEIIQGLDLDYYVDDKPTVLDTLTKTNTKLLIKDQSYNRNKKSFARIIDWHDFLQNKL</sequence>
<dbReference type="EC" id="3.1.3.-"/>
<dbReference type="EMBL" id="BA000028">
    <property type="protein sequence ID" value="BAC12378.1"/>
    <property type="molecule type" value="Genomic_DNA"/>
</dbReference>
<dbReference type="SMR" id="Q8ET41"/>
<dbReference type="STRING" id="221109.gene:10732625"/>
<dbReference type="KEGG" id="oih:OB0422"/>
<dbReference type="eggNOG" id="COG0560">
    <property type="taxonomic scope" value="Bacteria"/>
</dbReference>
<dbReference type="HOGENOM" id="CLU_1451732_0_0_9"/>
<dbReference type="OrthoDB" id="573782at2"/>
<dbReference type="Proteomes" id="UP000000822">
    <property type="component" value="Chromosome"/>
</dbReference>
<dbReference type="GO" id="GO:0016787">
    <property type="term" value="F:hydrolase activity"/>
    <property type="evidence" value="ECO:0007669"/>
    <property type="project" value="UniProtKB-KW"/>
</dbReference>
<dbReference type="Gene3D" id="3.40.50.1000">
    <property type="entry name" value="HAD superfamily/HAD-like"/>
    <property type="match status" value="1"/>
</dbReference>
<dbReference type="InterPro" id="IPR052419">
    <property type="entry name" value="5_3-deoxyribonucleotidase-like"/>
</dbReference>
<dbReference type="InterPro" id="IPR036412">
    <property type="entry name" value="HAD-like_sf"/>
</dbReference>
<dbReference type="InterPro" id="IPR023214">
    <property type="entry name" value="HAD_sf"/>
</dbReference>
<dbReference type="InterPro" id="IPR009206">
    <property type="entry name" value="Nucleotidase_putative"/>
</dbReference>
<dbReference type="PANTHER" id="PTHR35134">
    <property type="entry name" value="NUCLEOTIDASE YQFW-RELATED"/>
    <property type="match status" value="1"/>
</dbReference>
<dbReference type="PANTHER" id="PTHR35134:SF2">
    <property type="entry name" value="NUCLEOTIDASE YQFW-RELATED"/>
    <property type="match status" value="1"/>
</dbReference>
<dbReference type="Pfam" id="PF24694">
    <property type="entry name" value="LNS2_PITM1-3"/>
    <property type="match status" value="1"/>
</dbReference>
<dbReference type="PIRSF" id="PIRSF021362">
    <property type="entry name" value="UCP021362_HAD"/>
    <property type="match status" value="1"/>
</dbReference>
<dbReference type="SUPFAM" id="SSF56784">
    <property type="entry name" value="HAD-like"/>
    <property type="match status" value="1"/>
</dbReference>
<accession>Q8ET41</accession>
<name>Y422_OCEIH</name>
<gene>
    <name type="ordered locus">OB0422</name>
</gene>
<organism>
    <name type="scientific">Oceanobacillus iheyensis (strain DSM 14371 / CIP 107618 / JCM 11309 / KCTC 3954 / HTE831)</name>
    <dbReference type="NCBI Taxonomy" id="221109"/>
    <lineage>
        <taxon>Bacteria</taxon>
        <taxon>Bacillati</taxon>
        <taxon>Bacillota</taxon>
        <taxon>Bacilli</taxon>
        <taxon>Bacillales</taxon>
        <taxon>Bacillaceae</taxon>
        <taxon>Oceanobacillus</taxon>
    </lineage>
</organism>
<proteinExistence type="inferred from homology"/>
<protein>
    <recommendedName>
        <fullName>Putative nucleotidase OB0422</fullName>
        <ecNumber>3.1.3.-</ecNumber>
    </recommendedName>
</protein>
<feature type="chain" id="PRO_0000164393" description="Putative nucleotidase OB0422">
    <location>
        <begin position="1"/>
        <end position="188"/>
    </location>
</feature>
<evidence type="ECO:0000305" key="1"/>
<comment type="similarity">
    <text evidence="1">Belongs to the 5'(3')-deoxyribonucleotidase family.</text>
</comment>